<reference key="1">
    <citation type="journal article" date="2004" name="Nat. Genet.">
        <title>Complete sequencing and characterization of 21,243 full-length human cDNAs.</title>
        <authorList>
            <person name="Ota T."/>
            <person name="Suzuki Y."/>
            <person name="Nishikawa T."/>
            <person name="Otsuki T."/>
            <person name="Sugiyama T."/>
            <person name="Irie R."/>
            <person name="Wakamatsu A."/>
            <person name="Hayashi K."/>
            <person name="Sato H."/>
            <person name="Nagai K."/>
            <person name="Kimura K."/>
            <person name="Makita H."/>
            <person name="Sekine M."/>
            <person name="Obayashi M."/>
            <person name="Nishi T."/>
            <person name="Shibahara T."/>
            <person name="Tanaka T."/>
            <person name="Ishii S."/>
            <person name="Yamamoto J."/>
            <person name="Saito K."/>
            <person name="Kawai Y."/>
            <person name="Isono Y."/>
            <person name="Nakamura Y."/>
            <person name="Nagahari K."/>
            <person name="Murakami K."/>
            <person name="Yasuda T."/>
            <person name="Iwayanagi T."/>
            <person name="Wagatsuma M."/>
            <person name="Shiratori A."/>
            <person name="Sudo H."/>
            <person name="Hosoiri T."/>
            <person name="Kaku Y."/>
            <person name="Kodaira H."/>
            <person name="Kondo H."/>
            <person name="Sugawara M."/>
            <person name="Takahashi M."/>
            <person name="Kanda K."/>
            <person name="Yokoi T."/>
            <person name="Furuya T."/>
            <person name="Kikkawa E."/>
            <person name="Omura Y."/>
            <person name="Abe K."/>
            <person name="Kamihara K."/>
            <person name="Katsuta N."/>
            <person name="Sato K."/>
            <person name="Tanikawa M."/>
            <person name="Yamazaki M."/>
            <person name="Ninomiya K."/>
            <person name="Ishibashi T."/>
            <person name="Yamashita H."/>
            <person name="Murakawa K."/>
            <person name="Fujimori K."/>
            <person name="Tanai H."/>
            <person name="Kimata M."/>
            <person name="Watanabe M."/>
            <person name="Hiraoka S."/>
            <person name="Chiba Y."/>
            <person name="Ishida S."/>
            <person name="Ono Y."/>
            <person name="Takiguchi S."/>
            <person name="Watanabe S."/>
            <person name="Yosida M."/>
            <person name="Hotuta T."/>
            <person name="Kusano J."/>
            <person name="Kanehori K."/>
            <person name="Takahashi-Fujii A."/>
            <person name="Hara H."/>
            <person name="Tanase T.-O."/>
            <person name="Nomura Y."/>
            <person name="Togiya S."/>
            <person name="Komai F."/>
            <person name="Hara R."/>
            <person name="Takeuchi K."/>
            <person name="Arita M."/>
            <person name="Imose N."/>
            <person name="Musashino K."/>
            <person name="Yuuki H."/>
            <person name="Oshima A."/>
            <person name="Sasaki N."/>
            <person name="Aotsuka S."/>
            <person name="Yoshikawa Y."/>
            <person name="Matsunawa H."/>
            <person name="Ichihara T."/>
            <person name="Shiohata N."/>
            <person name="Sano S."/>
            <person name="Moriya S."/>
            <person name="Momiyama H."/>
            <person name="Satoh N."/>
            <person name="Takami S."/>
            <person name="Terashima Y."/>
            <person name="Suzuki O."/>
            <person name="Nakagawa S."/>
            <person name="Senoh A."/>
            <person name="Mizoguchi H."/>
            <person name="Goto Y."/>
            <person name="Shimizu F."/>
            <person name="Wakebe H."/>
            <person name="Hishigaki H."/>
            <person name="Watanabe T."/>
            <person name="Sugiyama A."/>
            <person name="Takemoto M."/>
            <person name="Kawakami B."/>
            <person name="Yamazaki M."/>
            <person name="Watanabe K."/>
            <person name="Kumagai A."/>
            <person name="Itakura S."/>
            <person name="Fukuzumi Y."/>
            <person name="Fujimori Y."/>
            <person name="Komiyama M."/>
            <person name="Tashiro H."/>
            <person name="Tanigami A."/>
            <person name="Fujiwara T."/>
            <person name="Ono T."/>
            <person name="Yamada K."/>
            <person name="Fujii Y."/>
            <person name="Ozaki K."/>
            <person name="Hirao M."/>
            <person name="Ohmori Y."/>
            <person name="Kawabata A."/>
            <person name="Hikiji T."/>
            <person name="Kobatake N."/>
            <person name="Inagaki H."/>
            <person name="Ikema Y."/>
            <person name="Okamoto S."/>
            <person name="Okitani R."/>
            <person name="Kawakami T."/>
            <person name="Noguchi S."/>
            <person name="Itoh T."/>
            <person name="Shigeta K."/>
            <person name="Senba T."/>
            <person name="Matsumura K."/>
            <person name="Nakajima Y."/>
            <person name="Mizuno T."/>
            <person name="Morinaga M."/>
            <person name="Sasaki M."/>
            <person name="Togashi T."/>
            <person name="Oyama M."/>
            <person name="Hata H."/>
            <person name="Watanabe M."/>
            <person name="Komatsu T."/>
            <person name="Mizushima-Sugano J."/>
            <person name="Satoh T."/>
            <person name="Shirai Y."/>
            <person name="Takahashi Y."/>
            <person name="Nakagawa K."/>
            <person name="Okumura K."/>
            <person name="Nagase T."/>
            <person name="Nomura N."/>
            <person name="Kikuchi H."/>
            <person name="Masuho Y."/>
            <person name="Yamashita R."/>
            <person name="Nakai K."/>
            <person name="Yada T."/>
            <person name="Nakamura Y."/>
            <person name="Ohara O."/>
            <person name="Isogai T."/>
            <person name="Sugano S."/>
        </authorList>
    </citation>
    <scope>NUCLEOTIDE SEQUENCE [LARGE SCALE MRNA] (ISOFORM 2)</scope>
</reference>
<reference key="2">
    <citation type="journal article" date="2004" name="Genome Res.">
        <title>The status, quality, and expansion of the NIH full-length cDNA project: the Mammalian Gene Collection (MGC).</title>
        <authorList>
            <consortium name="The MGC Project Team"/>
        </authorList>
    </citation>
    <scope>NUCLEOTIDE SEQUENCE [LARGE SCALE MRNA] (ISOFORM 1)</scope>
    <scope>VARIANT ASN-84</scope>
    <source>
        <tissue>Placenta</tissue>
    </source>
</reference>
<dbReference type="EMBL" id="AK027565">
    <property type="protein sequence ID" value="BAB55201.1"/>
    <property type="molecule type" value="mRNA"/>
</dbReference>
<dbReference type="EMBL" id="BC057776">
    <property type="protein sequence ID" value="AAH57776.1"/>
    <property type="molecule type" value="mRNA"/>
</dbReference>
<dbReference type="CCDS" id="CCDS12844.1">
    <molecule id="Q6PF04-2"/>
</dbReference>
<dbReference type="CCDS" id="CCDS33089.1">
    <molecule id="Q6PF04-1"/>
</dbReference>
<dbReference type="RefSeq" id="NP_001026891.2">
    <molecule id="Q6PF04-1"/>
    <property type="nucleotide sequence ID" value="NM_001031721.4"/>
</dbReference>
<dbReference type="RefSeq" id="NP_079116.2">
    <molecule id="Q6PF04-2"/>
    <property type="nucleotide sequence ID" value="NM_024840.3"/>
</dbReference>
<dbReference type="RefSeq" id="XP_005259326.1">
    <property type="nucleotide sequence ID" value="XM_005259269.3"/>
</dbReference>
<dbReference type="RefSeq" id="XP_011525635.1">
    <property type="nucleotide sequence ID" value="XM_011527333.2"/>
</dbReference>
<dbReference type="RefSeq" id="XP_016882804.1">
    <property type="nucleotide sequence ID" value="XM_017027315.1"/>
</dbReference>
<dbReference type="SMR" id="Q6PF04"/>
<dbReference type="BioGRID" id="122982">
    <property type="interactions" value="7"/>
</dbReference>
<dbReference type="FunCoup" id="Q6PF04">
    <property type="interactions" value="6"/>
</dbReference>
<dbReference type="IntAct" id="Q6PF04">
    <property type="interactions" value="5"/>
</dbReference>
<dbReference type="STRING" id="9606.ENSP00000293471"/>
<dbReference type="iPTMnet" id="Q6PF04"/>
<dbReference type="PhosphoSitePlus" id="Q6PF04"/>
<dbReference type="BioMuta" id="ZNF613"/>
<dbReference type="DMDM" id="116242862"/>
<dbReference type="jPOST" id="Q6PF04"/>
<dbReference type="MassIVE" id="Q6PF04"/>
<dbReference type="PaxDb" id="9606-ENSP00000293471"/>
<dbReference type="PeptideAtlas" id="Q6PF04"/>
<dbReference type="ProteomicsDB" id="67093">
    <molecule id="Q6PF04-1"/>
</dbReference>
<dbReference type="ProteomicsDB" id="67094">
    <molecule id="Q6PF04-2"/>
</dbReference>
<dbReference type="Antibodypedia" id="19057">
    <property type="antibodies" value="96 antibodies from 15 providers"/>
</dbReference>
<dbReference type="DNASU" id="79898"/>
<dbReference type="Ensembl" id="ENST00000293471.11">
    <molecule id="Q6PF04-1"/>
    <property type="protein sequence ID" value="ENSP00000293471.5"/>
    <property type="gene ID" value="ENSG00000176024.18"/>
</dbReference>
<dbReference type="Ensembl" id="ENST00000391794.8">
    <molecule id="Q6PF04-2"/>
    <property type="protein sequence ID" value="ENSP00000375671.3"/>
    <property type="gene ID" value="ENSG00000176024.18"/>
</dbReference>
<dbReference type="GeneID" id="79898"/>
<dbReference type="KEGG" id="hsa:79898"/>
<dbReference type="MANE-Select" id="ENST00000293471.11">
    <property type="protein sequence ID" value="ENSP00000293471.5"/>
    <property type="RefSeq nucleotide sequence ID" value="NM_001031721.4"/>
    <property type="RefSeq protein sequence ID" value="NP_001026891.2"/>
</dbReference>
<dbReference type="UCSC" id="uc002pxz.3">
    <molecule id="Q6PF04-1"/>
    <property type="organism name" value="human"/>
</dbReference>
<dbReference type="AGR" id="HGNC:25827"/>
<dbReference type="CTD" id="79898"/>
<dbReference type="DisGeNET" id="79898"/>
<dbReference type="GeneCards" id="ZNF613"/>
<dbReference type="HGNC" id="HGNC:25827">
    <property type="gene designation" value="ZNF613"/>
</dbReference>
<dbReference type="HPA" id="ENSG00000176024">
    <property type="expression patterns" value="Tissue enhanced (prostate)"/>
</dbReference>
<dbReference type="neXtProt" id="NX_Q6PF04"/>
<dbReference type="OpenTargets" id="ENSG00000176024"/>
<dbReference type="PharmGKB" id="PA134937067"/>
<dbReference type="VEuPathDB" id="HostDB:ENSG00000176024"/>
<dbReference type="eggNOG" id="KOG1721">
    <property type="taxonomic scope" value="Eukaryota"/>
</dbReference>
<dbReference type="GeneTree" id="ENSGT00940000162851"/>
<dbReference type="HOGENOM" id="CLU_002678_44_0_1"/>
<dbReference type="InParanoid" id="Q6PF04"/>
<dbReference type="OMA" id="KFPECGN"/>
<dbReference type="OrthoDB" id="427030at2759"/>
<dbReference type="PAN-GO" id="Q6PF04">
    <property type="GO annotations" value="3 GO annotations based on evolutionary models"/>
</dbReference>
<dbReference type="PhylomeDB" id="Q6PF04"/>
<dbReference type="TreeFam" id="TF350804"/>
<dbReference type="PathwayCommons" id="Q6PF04"/>
<dbReference type="Reactome" id="R-HSA-212436">
    <property type="pathway name" value="Generic Transcription Pathway"/>
</dbReference>
<dbReference type="SignaLink" id="Q6PF04"/>
<dbReference type="BioGRID-ORCS" id="79898">
    <property type="hits" value="10 hits in 1181 CRISPR screens"/>
</dbReference>
<dbReference type="ChiTaRS" id="ZNF613">
    <property type="organism name" value="human"/>
</dbReference>
<dbReference type="GenomeRNAi" id="79898"/>
<dbReference type="Pharos" id="Q6PF04">
    <property type="development level" value="Tdark"/>
</dbReference>
<dbReference type="PRO" id="PR:Q6PF04"/>
<dbReference type="Proteomes" id="UP000005640">
    <property type="component" value="Chromosome 19"/>
</dbReference>
<dbReference type="RNAct" id="Q6PF04">
    <property type="molecule type" value="protein"/>
</dbReference>
<dbReference type="Bgee" id="ENSG00000176024">
    <property type="expression patterns" value="Expressed in primordial germ cell in gonad and 96 other cell types or tissues"/>
</dbReference>
<dbReference type="ExpressionAtlas" id="Q6PF04">
    <property type="expression patterns" value="baseline and differential"/>
</dbReference>
<dbReference type="GO" id="GO:0005634">
    <property type="term" value="C:nucleus"/>
    <property type="evidence" value="ECO:0007669"/>
    <property type="project" value="UniProtKB-SubCell"/>
</dbReference>
<dbReference type="GO" id="GO:0003700">
    <property type="term" value="F:DNA-binding transcription factor activity"/>
    <property type="evidence" value="ECO:0000318"/>
    <property type="project" value="GO_Central"/>
</dbReference>
<dbReference type="GO" id="GO:0000978">
    <property type="term" value="F:RNA polymerase II cis-regulatory region sequence-specific DNA binding"/>
    <property type="evidence" value="ECO:0000318"/>
    <property type="project" value="GO_Central"/>
</dbReference>
<dbReference type="GO" id="GO:0008270">
    <property type="term" value="F:zinc ion binding"/>
    <property type="evidence" value="ECO:0007669"/>
    <property type="project" value="UniProtKB-KW"/>
</dbReference>
<dbReference type="GO" id="GO:0006357">
    <property type="term" value="P:regulation of transcription by RNA polymerase II"/>
    <property type="evidence" value="ECO:0000318"/>
    <property type="project" value="GO_Central"/>
</dbReference>
<dbReference type="CDD" id="cd07765">
    <property type="entry name" value="KRAB_A-box"/>
    <property type="match status" value="1"/>
</dbReference>
<dbReference type="FunFam" id="3.30.160.60:FF:004135">
    <property type="match status" value="2"/>
</dbReference>
<dbReference type="FunFam" id="3.30.160.60:FF:004496">
    <property type="match status" value="1"/>
</dbReference>
<dbReference type="FunFam" id="3.30.160.60:FF:000029">
    <property type="entry name" value="GLI family zinc finger 4"/>
    <property type="match status" value="2"/>
</dbReference>
<dbReference type="FunFam" id="3.30.160.60:FF:002343">
    <property type="entry name" value="Zinc finger protein 33A"/>
    <property type="match status" value="4"/>
</dbReference>
<dbReference type="FunFam" id="3.30.160.60:FF:000848">
    <property type="entry name" value="Zinc finger protein 35"/>
    <property type="match status" value="1"/>
</dbReference>
<dbReference type="FunFam" id="3.30.160.60:FF:001173">
    <property type="entry name" value="Zinc finger protein 613"/>
    <property type="match status" value="1"/>
</dbReference>
<dbReference type="FunFam" id="3.30.160.60:FF:001672">
    <property type="entry name" value="Zinc finger protein 614"/>
    <property type="match status" value="1"/>
</dbReference>
<dbReference type="Gene3D" id="6.10.140.140">
    <property type="match status" value="1"/>
</dbReference>
<dbReference type="Gene3D" id="3.30.160.60">
    <property type="entry name" value="Classic Zinc Finger"/>
    <property type="match status" value="12"/>
</dbReference>
<dbReference type="InterPro" id="IPR001909">
    <property type="entry name" value="KRAB"/>
</dbReference>
<dbReference type="InterPro" id="IPR036051">
    <property type="entry name" value="KRAB_dom_sf"/>
</dbReference>
<dbReference type="InterPro" id="IPR036236">
    <property type="entry name" value="Znf_C2H2_sf"/>
</dbReference>
<dbReference type="InterPro" id="IPR013087">
    <property type="entry name" value="Znf_C2H2_type"/>
</dbReference>
<dbReference type="PANTHER" id="PTHR24393">
    <property type="entry name" value="ZINC FINGER PROTEIN"/>
    <property type="match status" value="1"/>
</dbReference>
<dbReference type="PANTHER" id="PTHR24393:SF149">
    <property type="entry name" value="ZINC FINGER WITH KRAB AND SCAN DOMAINS 7"/>
    <property type="match status" value="1"/>
</dbReference>
<dbReference type="Pfam" id="PF01352">
    <property type="entry name" value="KRAB"/>
    <property type="match status" value="1"/>
</dbReference>
<dbReference type="Pfam" id="PF00096">
    <property type="entry name" value="zf-C2H2"/>
    <property type="match status" value="10"/>
</dbReference>
<dbReference type="SMART" id="SM00349">
    <property type="entry name" value="KRAB"/>
    <property type="match status" value="1"/>
</dbReference>
<dbReference type="SMART" id="SM00355">
    <property type="entry name" value="ZnF_C2H2"/>
    <property type="match status" value="12"/>
</dbReference>
<dbReference type="SUPFAM" id="SSF57667">
    <property type="entry name" value="beta-beta-alpha zinc fingers"/>
    <property type="match status" value="7"/>
</dbReference>
<dbReference type="SUPFAM" id="SSF109640">
    <property type="entry name" value="KRAB domain (Kruppel-associated box)"/>
    <property type="match status" value="1"/>
</dbReference>
<dbReference type="PROSITE" id="PS50805">
    <property type="entry name" value="KRAB"/>
    <property type="match status" value="1"/>
</dbReference>
<dbReference type="PROSITE" id="PS00028">
    <property type="entry name" value="ZINC_FINGER_C2H2_1"/>
    <property type="match status" value="12"/>
</dbReference>
<dbReference type="PROSITE" id="PS50157">
    <property type="entry name" value="ZINC_FINGER_C2H2_2"/>
    <property type="match status" value="12"/>
</dbReference>
<name>ZN613_HUMAN</name>
<accession>Q6PF04</accession>
<accession>Q96SS9</accession>
<protein>
    <recommendedName>
        <fullName>Zinc finger protein 613</fullName>
    </recommendedName>
</protein>
<evidence type="ECO:0000255" key="1">
    <source>
        <dbReference type="PROSITE-ProRule" id="PRU00042"/>
    </source>
</evidence>
<evidence type="ECO:0000255" key="2">
    <source>
        <dbReference type="PROSITE-ProRule" id="PRU00119"/>
    </source>
</evidence>
<evidence type="ECO:0000269" key="3">
    <source>
    </source>
</evidence>
<evidence type="ECO:0000303" key="4">
    <source>
    </source>
</evidence>
<evidence type="ECO:0000305" key="5"/>
<keyword id="KW-0025">Alternative splicing</keyword>
<keyword id="KW-0238">DNA-binding</keyword>
<keyword id="KW-0479">Metal-binding</keyword>
<keyword id="KW-0539">Nucleus</keyword>
<keyword id="KW-1267">Proteomics identification</keyword>
<keyword id="KW-1185">Reference proteome</keyword>
<keyword id="KW-0677">Repeat</keyword>
<keyword id="KW-0804">Transcription</keyword>
<keyword id="KW-0805">Transcription regulation</keyword>
<keyword id="KW-0862">Zinc</keyword>
<keyword id="KW-0863">Zinc-finger</keyword>
<organism>
    <name type="scientific">Homo sapiens</name>
    <name type="common">Human</name>
    <dbReference type="NCBI Taxonomy" id="9606"/>
    <lineage>
        <taxon>Eukaryota</taxon>
        <taxon>Metazoa</taxon>
        <taxon>Chordata</taxon>
        <taxon>Craniata</taxon>
        <taxon>Vertebrata</taxon>
        <taxon>Euteleostomi</taxon>
        <taxon>Mammalia</taxon>
        <taxon>Eutheria</taxon>
        <taxon>Euarchontoglires</taxon>
        <taxon>Primates</taxon>
        <taxon>Haplorrhini</taxon>
        <taxon>Catarrhini</taxon>
        <taxon>Hominidae</taxon>
        <taxon>Homo</taxon>
    </lineage>
</organism>
<comment type="function">
    <text>May be involved in transcriptional regulation.</text>
</comment>
<comment type="interaction">
    <interactant intactId="EBI-12062855">
        <id>Q6PF04</id>
    </interactant>
    <interactant intactId="EBI-3866279">
        <id>Q9BWT7</id>
        <label>CARD10</label>
    </interactant>
    <organismsDiffer>false</organismsDiffer>
    <experiments>3</experiments>
</comment>
<comment type="interaction">
    <interactant intactId="EBI-12062855">
        <id>Q6PF04</id>
    </interactant>
    <interactant intactId="EBI-750641">
        <id>Q5TD97</id>
        <label>FHL5</label>
    </interactant>
    <organismsDiffer>false</organismsDiffer>
    <experiments>3</experiments>
</comment>
<comment type="interaction">
    <interactant intactId="EBI-12062855">
        <id>Q6PF04</id>
    </interactant>
    <interactant intactId="EBI-11987425">
        <id>Q6L8G8</id>
        <label>KRTAP5-7</label>
    </interactant>
    <organismsDiffer>false</organismsDiffer>
    <experiments>3</experiments>
</comment>
<comment type="interaction">
    <interactant intactId="EBI-12062855">
        <id>Q6PF04</id>
    </interactant>
    <interactant intactId="EBI-724076">
        <id>Q99750</id>
        <label>MDFI</label>
    </interactant>
    <organismsDiffer>false</organismsDiffer>
    <experiments>3</experiments>
</comment>
<comment type="interaction">
    <interactant intactId="EBI-12062855">
        <id>Q6PF04</id>
    </interactant>
    <interactant intactId="EBI-11522433">
        <id>Q5JR59-3</id>
        <label>MTUS2</label>
    </interactant>
    <organismsDiffer>false</organismsDiffer>
    <experiments>3</experiments>
</comment>
<comment type="subcellular location">
    <subcellularLocation>
        <location evidence="5">Nucleus</location>
    </subcellularLocation>
</comment>
<comment type="alternative products">
    <event type="alternative splicing"/>
    <isoform>
        <id>Q6PF04-1</id>
        <name>1</name>
        <sequence type="displayed"/>
    </isoform>
    <isoform>
        <id>Q6PF04-2</id>
        <name>2</name>
        <sequence type="described" ref="VSP_018388"/>
    </isoform>
</comment>
<comment type="similarity">
    <text evidence="5">Belongs to the krueppel C2H2-type zinc-finger protein family.</text>
</comment>
<gene>
    <name type="primary">ZNF613</name>
</gene>
<feature type="chain" id="PRO_0000234597" description="Zinc finger protein 613">
    <location>
        <begin position="1"/>
        <end position="617"/>
    </location>
</feature>
<feature type="domain" description="KRAB" evidence="2">
    <location>
        <begin position="8"/>
        <end position="78"/>
    </location>
</feature>
<feature type="zinc finger region" description="C2H2-type 1" evidence="1">
    <location>
        <begin position="204"/>
        <end position="226"/>
    </location>
</feature>
<feature type="zinc finger region" description="C2H2-type 2" evidence="1">
    <location>
        <begin position="232"/>
        <end position="254"/>
    </location>
</feature>
<feature type="zinc finger region" description="C2H2-type 3" evidence="1">
    <location>
        <begin position="260"/>
        <end position="282"/>
    </location>
</feature>
<feature type="zinc finger region" description="C2H2-type 4" evidence="1">
    <location>
        <begin position="288"/>
        <end position="310"/>
    </location>
</feature>
<feature type="zinc finger region" description="C2H2-type 5" evidence="1">
    <location>
        <begin position="316"/>
        <end position="338"/>
    </location>
</feature>
<feature type="zinc finger region" description="C2H2-type 6" evidence="1">
    <location>
        <begin position="344"/>
        <end position="366"/>
    </location>
</feature>
<feature type="zinc finger region" description="C2H2-type 7" evidence="1">
    <location>
        <begin position="372"/>
        <end position="394"/>
    </location>
</feature>
<feature type="zinc finger region" description="C2H2-type 8" evidence="1">
    <location>
        <begin position="400"/>
        <end position="422"/>
    </location>
</feature>
<feature type="zinc finger region" description="C2H2-type 9" evidence="1">
    <location>
        <begin position="428"/>
        <end position="450"/>
    </location>
</feature>
<feature type="zinc finger region" description="C2H2-type 10" evidence="1">
    <location>
        <begin position="456"/>
        <end position="478"/>
    </location>
</feature>
<feature type="zinc finger region" description="C2H2-type 11" evidence="1">
    <location>
        <begin position="484"/>
        <end position="506"/>
    </location>
</feature>
<feature type="zinc finger region" description="C2H2-type 12" evidence="1">
    <location>
        <begin position="512"/>
        <end position="535"/>
    </location>
</feature>
<feature type="splice variant" id="VSP_018388" description="In isoform 2." evidence="4">
    <location>
        <begin position="1"/>
        <end position="36"/>
    </location>
</feature>
<feature type="sequence variant" id="VAR_028096" description="In dbSNP:rs17854933." evidence="3">
    <original>D</original>
    <variation>N</variation>
    <location>
        <position position="84"/>
    </location>
</feature>
<feature type="sequence variant" id="VAR_028097" description="In dbSNP:rs8106409.">
    <original>K</original>
    <variation>E</variation>
    <location>
        <position position="93"/>
    </location>
</feature>
<feature type="sequence variant" id="VAR_028098" description="In dbSNP:rs16983243.">
    <original>I</original>
    <variation>R</variation>
    <location>
        <position position="135"/>
    </location>
</feature>
<feature type="sequence variant" id="VAR_057428" description="In dbSNP:rs33998555.">
    <original>S</original>
    <variation>F</variation>
    <location>
        <position position="163"/>
    </location>
</feature>
<feature type="sequence variant" id="VAR_057429" description="In dbSNP:rs16983253.">
    <original>D</original>
    <variation>V</variation>
    <location>
        <position position="611"/>
    </location>
</feature>
<sequence>MIKSQESLTLEDVAVEFTWEEWQLLGPAQKDLYRDVMLENYSNLVSVGYQASKPDALFKLEQGEPWTVENEIHSQICPEIKKVDNHLQMHSQKQRCLKRVEQCHKHNAFGNIIHQRKSDFPLRQNHDTFDLHGKILKSNLSLVNQNKRYEIKNSVGVNGDGKSFLHAKHEQFHNEMNFPEGGNSVNTNSQFIKHQRTQNIDKPHVCTECGKAFLKKSRLIYHQRVHTGEKPHGCSICGKAFSRKSGLTEHQRNHTGEKPYECTECDKAFRWKSQLNAHQKIHTGEKSYICSDCGKGFIKKSRLINHQRVHTGEKPHGCSLCGKAFSKRSRLTEHQRTHTGEKPYECTECDKAFRWKSQLNAHQKAHTGEKSYICRDCGKGFIQKGNLIVHQRIHTGEKPYICNECGKGFIQKGNLLIHRRTHTGEKPYVCNECGKGFSQKTCLISHQRFHTGKTPFVCTECGKSCSHKSGLINHQRIHTGEKPYTCSDCGKAFRDKSCLNRHRRTHTGERPYGCSDCGKAFSHLSCLVYHKGMLHAREKCVGSVKLENPCSESHSLSHTRDLIQDKDSVNMVTLQMPSVAAQTSLTNSAFQAESKVAIVSQPVARSSVSADSRICTE</sequence>
<proteinExistence type="evidence at protein level"/>